<keyword id="KW-0456">Lyase</keyword>
<keyword id="KW-0460">Magnesium</keyword>
<keyword id="KW-0464">Manganese</keyword>
<keyword id="KW-0479">Metal-binding</keyword>
<keyword id="KW-0686">Riboflavin biosynthesis</keyword>
<name>RIBB_SALPK</name>
<organism>
    <name type="scientific">Salmonella paratyphi A (strain AKU_12601)</name>
    <dbReference type="NCBI Taxonomy" id="554290"/>
    <lineage>
        <taxon>Bacteria</taxon>
        <taxon>Pseudomonadati</taxon>
        <taxon>Pseudomonadota</taxon>
        <taxon>Gammaproteobacteria</taxon>
        <taxon>Enterobacterales</taxon>
        <taxon>Enterobacteriaceae</taxon>
        <taxon>Salmonella</taxon>
    </lineage>
</organism>
<protein>
    <recommendedName>
        <fullName evidence="1">3,4-dihydroxy-2-butanone 4-phosphate synthase</fullName>
        <shortName evidence="1">DHBP synthase</shortName>
        <ecNumber evidence="1">4.1.99.12</ecNumber>
    </recommendedName>
</protein>
<sequence>MNQTLLSSFGTPFERVELALDALREGRGVMVLDDEDRENEGDMIFPAEIMTVEQMALTIRHGSGIVCLCITEDRRKQLDLPMMVENNTSAYGTGFTVTIEAAEGVTTGVSAADRVTTVRAAIKDGAKPSDLNRPGHVFPLRAQAGGVLTRGGHTEATIDLMTLAGFKPAGVLCELTNDDGTMARAPECIAFAGQHNMAVVTIEDLVAYRQAHERKAS</sequence>
<proteinExistence type="inferred from homology"/>
<reference key="1">
    <citation type="journal article" date="2009" name="BMC Genomics">
        <title>Pseudogene accumulation in the evolutionary histories of Salmonella enterica serovars Paratyphi A and Typhi.</title>
        <authorList>
            <person name="Holt K.E."/>
            <person name="Thomson N.R."/>
            <person name="Wain J."/>
            <person name="Langridge G.C."/>
            <person name="Hasan R."/>
            <person name="Bhutta Z.A."/>
            <person name="Quail M.A."/>
            <person name="Norbertczak H."/>
            <person name="Walker D."/>
            <person name="Simmonds M."/>
            <person name="White B."/>
            <person name="Bason N."/>
            <person name="Mungall K."/>
            <person name="Dougan G."/>
            <person name="Parkhill J."/>
        </authorList>
    </citation>
    <scope>NUCLEOTIDE SEQUENCE [LARGE SCALE GENOMIC DNA]</scope>
    <source>
        <strain>AKU_12601</strain>
    </source>
</reference>
<gene>
    <name evidence="1" type="primary">ribB</name>
    <name type="ordered locus">SSPA2859</name>
</gene>
<comment type="function">
    <text evidence="1">Catalyzes the conversion of D-ribulose 5-phosphate to formate and 3,4-dihydroxy-2-butanone 4-phosphate.</text>
</comment>
<comment type="catalytic activity">
    <reaction evidence="1">
        <text>D-ribulose 5-phosphate = (2S)-2-hydroxy-3-oxobutyl phosphate + formate + H(+)</text>
        <dbReference type="Rhea" id="RHEA:18457"/>
        <dbReference type="ChEBI" id="CHEBI:15378"/>
        <dbReference type="ChEBI" id="CHEBI:15740"/>
        <dbReference type="ChEBI" id="CHEBI:58121"/>
        <dbReference type="ChEBI" id="CHEBI:58830"/>
        <dbReference type="EC" id="4.1.99.12"/>
    </reaction>
</comment>
<comment type="cofactor">
    <cofactor evidence="1">
        <name>Mg(2+)</name>
        <dbReference type="ChEBI" id="CHEBI:18420"/>
    </cofactor>
    <cofactor evidence="1">
        <name>Mn(2+)</name>
        <dbReference type="ChEBI" id="CHEBI:29035"/>
    </cofactor>
    <text evidence="1">Binds 2 divalent metal cations per subunit. Magnesium or manganese.</text>
</comment>
<comment type="pathway">
    <text evidence="1">Cofactor biosynthesis; riboflavin biosynthesis; 2-hydroxy-3-oxobutyl phosphate from D-ribulose 5-phosphate: step 1/1.</text>
</comment>
<comment type="subunit">
    <text evidence="1">Homodimer.</text>
</comment>
<comment type="similarity">
    <text evidence="1">Belongs to the DHBP synthase family.</text>
</comment>
<accession>B5BG06</accession>
<evidence type="ECO:0000255" key="1">
    <source>
        <dbReference type="HAMAP-Rule" id="MF_00180"/>
    </source>
</evidence>
<dbReference type="EC" id="4.1.99.12" evidence="1"/>
<dbReference type="EMBL" id="FM200053">
    <property type="protein sequence ID" value="CAR61106.1"/>
    <property type="molecule type" value="Genomic_DNA"/>
</dbReference>
<dbReference type="RefSeq" id="WP_001076973.1">
    <property type="nucleotide sequence ID" value="NC_011147.1"/>
</dbReference>
<dbReference type="SMR" id="B5BG06"/>
<dbReference type="KEGG" id="sek:SSPA2859"/>
<dbReference type="HOGENOM" id="CLU_020273_3_0_6"/>
<dbReference type="UniPathway" id="UPA00275">
    <property type="reaction ID" value="UER00399"/>
</dbReference>
<dbReference type="Proteomes" id="UP000001869">
    <property type="component" value="Chromosome"/>
</dbReference>
<dbReference type="GO" id="GO:0005829">
    <property type="term" value="C:cytosol"/>
    <property type="evidence" value="ECO:0007669"/>
    <property type="project" value="TreeGrafter"/>
</dbReference>
<dbReference type="GO" id="GO:0008686">
    <property type="term" value="F:3,4-dihydroxy-2-butanone-4-phosphate synthase activity"/>
    <property type="evidence" value="ECO:0007669"/>
    <property type="project" value="UniProtKB-UniRule"/>
</dbReference>
<dbReference type="GO" id="GO:0000287">
    <property type="term" value="F:magnesium ion binding"/>
    <property type="evidence" value="ECO:0007669"/>
    <property type="project" value="UniProtKB-UniRule"/>
</dbReference>
<dbReference type="GO" id="GO:0030145">
    <property type="term" value="F:manganese ion binding"/>
    <property type="evidence" value="ECO:0007669"/>
    <property type="project" value="UniProtKB-UniRule"/>
</dbReference>
<dbReference type="GO" id="GO:0009231">
    <property type="term" value="P:riboflavin biosynthetic process"/>
    <property type="evidence" value="ECO:0007669"/>
    <property type="project" value="UniProtKB-UniRule"/>
</dbReference>
<dbReference type="FunFam" id="3.90.870.10:FF:000002">
    <property type="entry name" value="3,4-dihydroxy-2-butanone 4-phosphate synthase"/>
    <property type="match status" value="1"/>
</dbReference>
<dbReference type="Gene3D" id="3.90.870.10">
    <property type="entry name" value="DHBP synthase"/>
    <property type="match status" value="1"/>
</dbReference>
<dbReference type="HAMAP" id="MF_00180">
    <property type="entry name" value="RibB"/>
    <property type="match status" value="1"/>
</dbReference>
<dbReference type="InterPro" id="IPR017945">
    <property type="entry name" value="DHBP_synth_RibB-like_a/b_dom"/>
</dbReference>
<dbReference type="InterPro" id="IPR000422">
    <property type="entry name" value="DHBP_synthase_RibB"/>
</dbReference>
<dbReference type="NCBIfam" id="TIGR00506">
    <property type="entry name" value="ribB"/>
    <property type="match status" value="1"/>
</dbReference>
<dbReference type="PANTHER" id="PTHR21327:SF38">
    <property type="entry name" value="3,4-DIHYDROXY-2-BUTANONE 4-PHOSPHATE SYNTHASE"/>
    <property type="match status" value="1"/>
</dbReference>
<dbReference type="PANTHER" id="PTHR21327">
    <property type="entry name" value="GTP CYCLOHYDROLASE II-RELATED"/>
    <property type="match status" value="1"/>
</dbReference>
<dbReference type="Pfam" id="PF00926">
    <property type="entry name" value="DHBP_synthase"/>
    <property type="match status" value="1"/>
</dbReference>
<dbReference type="SUPFAM" id="SSF55821">
    <property type="entry name" value="YrdC/RibB"/>
    <property type="match status" value="1"/>
</dbReference>
<feature type="chain" id="PRO_1000098289" description="3,4-dihydroxy-2-butanone 4-phosphate synthase">
    <location>
        <begin position="1"/>
        <end position="217"/>
    </location>
</feature>
<feature type="binding site" evidence="1">
    <location>
        <begin position="37"/>
        <end position="38"/>
    </location>
    <ligand>
        <name>D-ribulose 5-phosphate</name>
        <dbReference type="ChEBI" id="CHEBI:58121"/>
    </ligand>
</feature>
<feature type="binding site" evidence="1">
    <location>
        <position position="38"/>
    </location>
    <ligand>
        <name>Mg(2+)</name>
        <dbReference type="ChEBI" id="CHEBI:18420"/>
        <label>1</label>
    </ligand>
</feature>
<feature type="binding site" evidence="1">
    <location>
        <position position="38"/>
    </location>
    <ligand>
        <name>Mg(2+)</name>
        <dbReference type="ChEBI" id="CHEBI:18420"/>
        <label>2</label>
    </ligand>
</feature>
<feature type="binding site" evidence="1">
    <location>
        <position position="42"/>
    </location>
    <ligand>
        <name>D-ribulose 5-phosphate</name>
        <dbReference type="ChEBI" id="CHEBI:58121"/>
    </ligand>
</feature>
<feature type="binding site" evidence="1">
    <location>
        <begin position="150"/>
        <end position="154"/>
    </location>
    <ligand>
        <name>D-ribulose 5-phosphate</name>
        <dbReference type="ChEBI" id="CHEBI:58121"/>
    </ligand>
</feature>
<feature type="binding site" evidence="1">
    <location>
        <position position="153"/>
    </location>
    <ligand>
        <name>Mg(2+)</name>
        <dbReference type="ChEBI" id="CHEBI:18420"/>
        <label>2</label>
    </ligand>
</feature>
<feature type="binding site" evidence="1">
    <location>
        <position position="174"/>
    </location>
    <ligand>
        <name>D-ribulose 5-phosphate</name>
        <dbReference type="ChEBI" id="CHEBI:58121"/>
    </ligand>
</feature>
<feature type="site" description="Essential for catalytic activity" evidence="1">
    <location>
        <position position="136"/>
    </location>
</feature>
<feature type="site" description="Essential for catalytic activity" evidence="1">
    <location>
        <position position="174"/>
    </location>
</feature>